<organism>
    <name type="scientific">Buchnera aphidicola subsp. Acyrthosiphon pisum (strain APS)</name>
    <name type="common">Acyrthosiphon pisum symbiotic bacterium</name>
    <dbReference type="NCBI Taxonomy" id="107806"/>
    <lineage>
        <taxon>Bacteria</taxon>
        <taxon>Pseudomonadati</taxon>
        <taxon>Pseudomonadota</taxon>
        <taxon>Gammaproteobacteria</taxon>
        <taxon>Enterobacterales</taxon>
        <taxon>Erwiniaceae</taxon>
        <taxon>Buchnera</taxon>
    </lineage>
</organism>
<name>TRPG_BUCAI</name>
<reference key="1">
    <citation type="journal article" date="1996" name="J. Mol. Evol.">
        <title>The tryptophan biosynthetic pathway of aphid endosymbionts (Buchnera): genetics and evolution of plasmid-associated anthranilate synthase (trpEG) within the aphididae.</title>
        <authorList>
            <person name="Rouhbakhsh D."/>
            <person name="Lai C.-Y."/>
            <person name="von Dohlen C.D."/>
            <person name="Clark M.A."/>
            <person name="Baumann L."/>
            <person name="Baumann P."/>
            <person name="Moran N.A."/>
            <person name="Voegtlin D.J."/>
        </authorList>
    </citation>
    <scope>NUCLEOTIDE SEQUENCE [GENOMIC DNA]</scope>
</reference>
<reference key="2">
    <citation type="submission" date="2003-10" db="EMBL/GenBank/DDBJ databases">
        <title>Genetic mechanisms for regulating nutrient provisioning by symbionts to hosts: the pTrp plasmid in Buchnera.</title>
        <authorList>
            <person name="Plague G.R."/>
            <person name="Kaur S."/>
            <person name="Wilcox J.L."/>
            <person name="Bishop B."/>
            <person name="Moran N.A."/>
        </authorList>
    </citation>
    <scope>NUCLEOTIDE SEQUENCE [GENOMIC DNA]</scope>
    <source>
        <strain>APS</strain>
    </source>
</reference>
<reference key="3">
    <citation type="journal article" date="2000" name="Nature">
        <title>Genome sequence of the endocellular bacterial symbiont of aphids Buchnera sp. APS.</title>
        <authorList>
            <person name="Shigenobu S."/>
            <person name="Watanabe H."/>
            <person name="Hattori M."/>
            <person name="Sakaki Y."/>
            <person name="Ishikawa H."/>
        </authorList>
    </citation>
    <scope>NUCLEOTIDE SEQUENCE [LARGE SCALE GENOMIC DNA]</scope>
    <source>
        <strain>APS</strain>
    </source>
</reference>
<protein>
    <recommendedName>
        <fullName>Anthranilate synthase component 2</fullName>
        <shortName>AS</shortName>
        <shortName>ASII</shortName>
        <ecNumber>4.1.3.27</ecNumber>
    </recommendedName>
    <alternativeName>
        <fullName>Anthranilate synthase, GATase component</fullName>
    </alternativeName>
    <alternativeName>
        <fullName>Anthranilate synthase, glutamine amidotransferase component</fullName>
    </alternativeName>
</protein>
<feature type="chain" id="PRO_0000056872" description="Anthranilate synthase component 2">
    <location>
        <begin position="1"/>
        <end position="200"/>
    </location>
</feature>
<feature type="domain" description="Glutamine amidotransferase type-1" evidence="3">
    <location>
        <begin position="3"/>
        <end position="196"/>
    </location>
</feature>
<feature type="active site" description="Nucleophile; for GATase activity" evidence="3">
    <location>
        <position position="84"/>
    </location>
</feature>
<feature type="active site" description="For GATase activity" evidence="3">
    <location>
        <position position="170"/>
    </location>
</feature>
<feature type="active site" description="For GATase activity" evidence="3">
    <location>
        <position position="172"/>
    </location>
</feature>
<feature type="binding site" evidence="2">
    <location>
        <begin position="57"/>
        <end position="59"/>
    </location>
    <ligand>
        <name>L-glutamine</name>
        <dbReference type="ChEBI" id="CHEBI:58359"/>
    </ligand>
</feature>
<feature type="binding site" evidence="2">
    <location>
        <position position="88"/>
    </location>
    <ligand>
        <name>L-glutamine</name>
        <dbReference type="ChEBI" id="CHEBI:58359"/>
    </ligand>
</feature>
<feature type="binding site" evidence="2">
    <location>
        <begin position="134"/>
        <end position="135"/>
    </location>
    <ligand>
        <name>L-glutamine</name>
        <dbReference type="ChEBI" id="CHEBI:58359"/>
    </ligand>
</feature>
<feature type="sequence conflict" description="In Ref. 1; AAD09347." evidence="4" ref="1">
    <original>D</original>
    <variation>N</variation>
    <location>
        <position position="69"/>
    </location>
</feature>
<accession>Q44696</accession>
<accession>Q5GL25</accession>
<accession>Q9K2G8</accession>
<geneLocation type="plasmid">
    <name>pTrp</name>
    <name>pBAp</name>
</geneLocation>
<comment type="function">
    <text evidence="1">Part of a heterotetrameric complex that catalyzes the two-step biosynthesis of anthranilate, an intermediate in the biosynthesis of L-tryptophan. In the first step, the glutamine-binding beta subunit (TrpG) of anthranilate synthase (AS) provides the glutamine amidotransferase activity which generates ammonia as a substrate that, along with chorismate, is used in the second step, catalyzed by the large alpha subunit of AS (TrpE) to produce anthranilate. In the absence of TrpG, TrpE can synthesize anthranilate directly from chorismate and high concentrations of ammonia (By similarity).</text>
</comment>
<comment type="catalytic activity">
    <reaction>
        <text>chorismate + L-glutamine = anthranilate + pyruvate + L-glutamate + H(+)</text>
        <dbReference type="Rhea" id="RHEA:21732"/>
        <dbReference type="ChEBI" id="CHEBI:15361"/>
        <dbReference type="ChEBI" id="CHEBI:15378"/>
        <dbReference type="ChEBI" id="CHEBI:16567"/>
        <dbReference type="ChEBI" id="CHEBI:29748"/>
        <dbReference type="ChEBI" id="CHEBI:29985"/>
        <dbReference type="ChEBI" id="CHEBI:58359"/>
        <dbReference type="EC" id="4.1.3.27"/>
    </reaction>
</comment>
<comment type="pathway">
    <text>Amino-acid biosynthesis; L-tryptophan biosynthesis; L-tryptophan from chorismate: step 1/5.</text>
</comment>
<comment type="subunit">
    <text evidence="1">Heterotetramer consisting of two non-identical subunits: a beta subunit (TrpG) and a large alpha subunit (TrpE).</text>
</comment>
<sequence>MANILLLDNIDSFTYNLVEQLRNQKNNVLVYRNTVSIDIIFNSLKKLTHPILMLSPGPSLPKHAGCMLDLIKKVKGDIPIVGICLGHQAIVEAYGGIIGYAGEIFHGKASLIRHDGLEMFEGVPQPLPVARYHSLICNKIPEKFVINSYFEKMIMSVRNNCDRVCGFQFHPESILTTHGDQILEKIIHWASLKYITNKKQ</sequence>
<gene>
    <name type="primary">trpG</name>
    <name type="ordered locus">BUpT02</name>
</gene>
<gene>
    <name type="primary">trpG2</name>
    <name type="ordered locus">BUpT04</name>
</gene>
<evidence type="ECO:0000250" key="1"/>
<evidence type="ECO:0000250" key="2">
    <source>
        <dbReference type="UniProtKB" id="P00900"/>
    </source>
</evidence>
<evidence type="ECO:0000255" key="3">
    <source>
        <dbReference type="PROSITE-ProRule" id="PRU00605"/>
    </source>
</evidence>
<evidence type="ECO:0000305" key="4"/>
<proteinExistence type="inferred from homology"/>
<dbReference type="EC" id="4.1.3.27"/>
<dbReference type="EMBL" id="L43555">
    <property type="protein sequence ID" value="AAD09347.1"/>
    <property type="molecule type" value="Genomic_DNA"/>
</dbReference>
<dbReference type="EMBL" id="AY444795">
    <property type="protein sequence ID" value="AAS02054.1"/>
    <property type="molecule type" value="Genomic_DNA"/>
</dbReference>
<dbReference type="EMBL" id="AP001070">
    <property type="protein sequence ID" value="BAA95418.1"/>
    <property type="molecule type" value="Genomic_DNA"/>
</dbReference>
<dbReference type="EMBL" id="AP001070">
    <property type="protein sequence ID" value="BAA95419.1"/>
    <property type="molecule type" value="Genomic_DNA"/>
</dbReference>
<dbReference type="RefSeq" id="NP_057963.1">
    <property type="nucleotide sequence ID" value="NC_002252.1"/>
</dbReference>
<dbReference type="RefSeq" id="NP_057964.1">
    <property type="nucleotide sequence ID" value="NC_002252.1"/>
</dbReference>
<dbReference type="RefSeq" id="WP_010892290.1">
    <property type="nucleotide sequence ID" value="NC_002252.1"/>
</dbReference>
<dbReference type="SMR" id="Q44696"/>
<dbReference type="MEROPS" id="C26.960"/>
<dbReference type="EnsemblBacteria" id="BAA95418">
    <property type="protein sequence ID" value="BAA95418"/>
    <property type="gene ID" value="BAA95418"/>
</dbReference>
<dbReference type="EnsemblBacteria" id="BAA95419">
    <property type="protein sequence ID" value="BAA95419"/>
    <property type="gene ID" value="BAA95419"/>
</dbReference>
<dbReference type="KEGG" id="buc:BUpT02"/>
<dbReference type="KEGG" id="buc:BUpT04"/>
<dbReference type="PATRIC" id="fig|107806.10.peg.2"/>
<dbReference type="eggNOG" id="COG0512">
    <property type="taxonomic scope" value="Bacteria"/>
</dbReference>
<dbReference type="HOGENOM" id="CLU_014340_1_0_6"/>
<dbReference type="UniPathway" id="UPA00035">
    <property type="reaction ID" value="UER00040"/>
</dbReference>
<dbReference type="Proteomes" id="UP000001806">
    <property type="component" value="Plasmid pTrp"/>
</dbReference>
<dbReference type="GO" id="GO:0005829">
    <property type="term" value="C:cytosol"/>
    <property type="evidence" value="ECO:0007669"/>
    <property type="project" value="TreeGrafter"/>
</dbReference>
<dbReference type="GO" id="GO:0004048">
    <property type="term" value="F:anthranilate phosphoribosyltransferase activity"/>
    <property type="evidence" value="ECO:0007669"/>
    <property type="project" value="TreeGrafter"/>
</dbReference>
<dbReference type="GO" id="GO:0004049">
    <property type="term" value="F:anthranilate synthase activity"/>
    <property type="evidence" value="ECO:0007669"/>
    <property type="project" value="UniProtKB-EC"/>
</dbReference>
<dbReference type="GO" id="GO:0000162">
    <property type="term" value="P:L-tryptophan biosynthetic process"/>
    <property type="evidence" value="ECO:0007669"/>
    <property type="project" value="UniProtKB-UniPathway"/>
</dbReference>
<dbReference type="GO" id="GO:0002047">
    <property type="term" value="P:phenazine biosynthetic process"/>
    <property type="evidence" value="ECO:0007669"/>
    <property type="project" value="TreeGrafter"/>
</dbReference>
<dbReference type="CDD" id="cd01743">
    <property type="entry name" value="GATase1_Anthranilate_Synthase"/>
    <property type="match status" value="1"/>
</dbReference>
<dbReference type="FunFam" id="3.40.50.880:FF:000003">
    <property type="entry name" value="Anthranilate synthase component II"/>
    <property type="match status" value="1"/>
</dbReference>
<dbReference type="Gene3D" id="3.40.50.880">
    <property type="match status" value="1"/>
</dbReference>
<dbReference type="InterPro" id="IPR050472">
    <property type="entry name" value="Anth_synth/Amidotransfase"/>
</dbReference>
<dbReference type="InterPro" id="IPR029062">
    <property type="entry name" value="Class_I_gatase-like"/>
</dbReference>
<dbReference type="InterPro" id="IPR017926">
    <property type="entry name" value="GATASE"/>
</dbReference>
<dbReference type="InterPro" id="IPR006221">
    <property type="entry name" value="TrpG/PapA_dom"/>
</dbReference>
<dbReference type="NCBIfam" id="TIGR00566">
    <property type="entry name" value="trpG_papA"/>
    <property type="match status" value="1"/>
</dbReference>
<dbReference type="PANTHER" id="PTHR43418:SF2">
    <property type="entry name" value="BIFUNCTIONAL PROTEIN TRPGD"/>
    <property type="match status" value="1"/>
</dbReference>
<dbReference type="PANTHER" id="PTHR43418">
    <property type="entry name" value="MULTIFUNCTIONAL TRYPTOPHAN BIOSYNTHESIS PROTEIN-RELATED"/>
    <property type="match status" value="1"/>
</dbReference>
<dbReference type="Pfam" id="PF00117">
    <property type="entry name" value="GATase"/>
    <property type="match status" value="1"/>
</dbReference>
<dbReference type="PRINTS" id="PR00097">
    <property type="entry name" value="ANTSNTHASEII"/>
</dbReference>
<dbReference type="PRINTS" id="PR00096">
    <property type="entry name" value="GATASE"/>
</dbReference>
<dbReference type="SUPFAM" id="SSF52317">
    <property type="entry name" value="Class I glutamine amidotransferase-like"/>
    <property type="match status" value="1"/>
</dbReference>
<dbReference type="PROSITE" id="PS51273">
    <property type="entry name" value="GATASE_TYPE_1"/>
    <property type="match status" value="1"/>
</dbReference>
<keyword id="KW-0028">Amino-acid biosynthesis</keyword>
<keyword id="KW-0057">Aromatic amino acid biosynthesis</keyword>
<keyword id="KW-0315">Glutamine amidotransferase</keyword>
<keyword id="KW-0456">Lyase</keyword>
<keyword id="KW-0614">Plasmid</keyword>
<keyword id="KW-1185">Reference proteome</keyword>
<keyword id="KW-0822">Tryptophan biosynthesis</keyword>